<protein>
    <recommendedName>
        <fullName evidence="7">Histamine H1 receptor</fullName>
        <shortName evidence="1">H1R</shortName>
        <shortName>HH1R</shortName>
    </recommendedName>
</protein>
<sequence length="488" mass="55620">MSFLPGMTPVTLSNFSWALEDRMLEGNSTTTPTRQLMPLVVVLSSVSLVTVALNLLVLYAVRSERKLHTVGNLYIVSLSVADLIVGAVVMPMSILYLHRSAWILGRPLCLFWLSMDYVASTASIFSVFILCIDRYRSVQQPLRYLRYRTKTRASATILGAWLLSFLWVIPILGWHHFMAPTSEPREKKCETDFYDVTWFKVMTAIINFYLPTLLMLWFYIRIYKAVRRHCQHRQLINSSLPSFSEMKLKLENAKVDTRRMGKESPWEDPKRCSKDASGVHTPMPSSQHLVDMPCAAVLSEDEGGEVGTRQMPMLAVGDGRCCEALNHMHSQLELSGQSRATHSISARPEEWTVVDGQSFPITDSDTSTEAAPMGGQPRSGSNSGLDYIKFTWRRLRSHSRQYTSGLHLNRERKAAKQLGCIMAAFILCWIPYFVFFMVIAFCKSCSNEPVHMFTIWLGYLNSTLNPLIYPLCNENFRKTFKRILRIPP</sequence>
<accession>P31389</accession>
<reference key="1">
    <citation type="journal article" date="1993" name="J. Biochem.">
        <title>Molecular cloning of the guinea-pig histamine H1 receptor gene.</title>
        <authorList>
            <person name="Horio Y."/>
            <person name="Mori Y."/>
            <person name="Higuchi I."/>
            <person name="Fujimoto K."/>
            <person name="Ito S."/>
            <person name="Fukui H."/>
        </authorList>
    </citation>
    <scope>NUCLEOTIDE SEQUENCE [GENOMIC DNA]</scope>
    <scope>FUNCTION</scope>
    <scope>SUBCELLULAR LOCATION</scope>
    <source>
        <strain>Hartley</strain>
        <tissue>Liver</tissue>
    </source>
</reference>
<reference key="2">
    <citation type="journal article" date="1994" name="J. Neurochem.">
        <title>Guinea pig histamine H1 receptor. I. Gene cloning, characterization, and tissue expression revealed by in situ hybridization.</title>
        <authorList>
            <person name="Traiffort E."/>
            <person name="Leurs R."/>
            <person name="Arrang J.-M."/>
            <person name="Tardivel-Lacombe J."/>
            <person name="Diaz J."/>
            <person name="Schwartz J.-C."/>
            <person name="Ruat M."/>
        </authorList>
    </citation>
    <scope>NUCLEOTIDE SEQUENCE [GENOMIC DNA]</scope>
</reference>
<comment type="function">
    <text evidence="2 6">G-protein-coupled receptor for histamine, a biogenic amine that functions as an immune modulator and a neurotransmitter (PubMed:8282735). Through the H1 receptor, histamine mediates the contraction of smooth muscles and increases capillary permeability due to contraction of terminal venules. Also mediates neurotransmission in the central nervous system and thereby regulates circadian rhythms, emotional and locomotor activities as well as cognitive functions (By similarity).</text>
</comment>
<comment type="subcellular location">
    <subcellularLocation>
        <location evidence="6">Cell membrane</location>
        <topology evidence="1">Multi-pass membrane protein</topology>
    </subcellularLocation>
</comment>
<comment type="domain">
    <text evidence="1">Histamine activates the receptor by forming hydrogen bonds with transmembrane domains 3 and 6, squashing the ligand-binding pocket on the extracellular side and opening the cavity for G-protein engagement on the intracellular side.</text>
</comment>
<comment type="PTM">
    <text evidence="1">Phosphorylation at sites in the second and third cytoplasmic loops independently contribute to agonist-induced receptor down-regulation.</text>
</comment>
<comment type="similarity">
    <text evidence="4">Belongs to the G-protein coupled receptor 1 family.</text>
</comment>
<feature type="chain" id="PRO_0000069674" description="Histamine H1 receptor">
    <location>
        <begin position="1"/>
        <end position="488"/>
    </location>
</feature>
<feature type="topological domain" description="Extracellular" evidence="8">
    <location>
        <begin position="1"/>
        <end position="38"/>
    </location>
</feature>
<feature type="transmembrane region" description="Helical; Name=1" evidence="1">
    <location>
        <begin position="39"/>
        <end position="59"/>
    </location>
</feature>
<feature type="topological domain" description="Cytoplasmic" evidence="8">
    <location>
        <begin position="60"/>
        <end position="73"/>
    </location>
</feature>
<feature type="transmembrane region" description="Helical; Name=2" evidence="1">
    <location>
        <begin position="74"/>
        <end position="98"/>
    </location>
</feature>
<feature type="topological domain" description="Extracellular" evidence="8">
    <location>
        <begin position="99"/>
        <end position="106"/>
    </location>
</feature>
<feature type="transmembrane region" description="Helical; Name=3" evidence="1">
    <location>
        <begin position="107"/>
        <end position="132"/>
    </location>
</feature>
<feature type="topological domain" description="Cytoplasmic" evidence="8">
    <location>
        <begin position="133"/>
        <end position="153"/>
    </location>
</feature>
<feature type="transmembrane region" description="Helical; Name=4" evidence="1">
    <location>
        <begin position="154"/>
        <end position="173"/>
    </location>
</feature>
<feature type="topological domain" description="Extracellular" evidence="8">
    <location>
        <begin position="174"/>
        <end position="197"/>
    </location>
</feature>
<feature type="transmembrane region" description="Helical; Name=5" evidence="1">
    <location>
        <begin position="198"/>
        <end position="220"/>
    </location>
</feature>
<feature type="topological domain" description="Cytoplasmic" evidence="8">
    <location>
        <begin position="221"/>
        <end position="417"/>
    </location>
</feature>
<feature type="transmembrane region" description="Helical; Name=6" evidence="1">
    <location>
        <begin position="418"/>
        <end position="441"/>
    </location>
</feature>
<feature type="topological domain" description="Extracellular" evidence="8">
    <location>
        <begin position="442"/>
        <end position="447"/>
    </location>
</feature>
<feature type="transmembrane region" description="Helical; Name=7" evidence="1">
    <location>
        <begin position="448"/>
        <end position="470"/>
    </location>
</feature>
<feature type="topological domain" description="Cytoplasmic" evidence="8">
    <location>
        <begin position="471"/>
        <end position="488"/>
    </location>
</feature>
<feature type="region of interest" description="Important for agonist binding" evidence="1">
    <location>
        <begin position="116"/>
        <end position="121"/>
    </location>
</feature>
<feature type="region of interest" description="Disordered" evidence="5">
    <location>
        <begin position="259"/>
        <end position="285"/>
    </location>
</feature>
<feature type="region of interest" description="Important for agonist binding" evidence="1">
    <location>
        <begin position="425"/>
        <end position="429"/>
    </location>
</feature>
<feature type="compositionally biased region" description="Basic and acidic residues" evidence="5">
    <location>
        <begin position="259"/>
        <end position="274"/>
    </location>
</feature>
<feature type="binding site" evidence="1">
    <location>
        <position position="116"/>
    </location>
    <ligand>
        <name>histamine</name>
        <dbReference type="ChEBI" id="CHEBI:58432"/>
    </ligand>
</feature>
<feature type="binding site" evidence="1">
    <location>
        <position position="121"/>
    </location>
    <ligand>
        <name>histamine</name>
        <dbReference type="ChEBI" id="CHEBI:58432"/>
    </ligand>
</feature>
<feature type="binding site" evidence="1">
    <location>
        <position position="207"/>
    </location>
    <ligand>
        <name>histamine</name>
        <dbReference type="ChEBI" id="CHEBI:58432"/>
    </ligand>
</feature>
<feature type="binding site" evidence="1">
    <location>
        <position position="432"/>
    </location>
    <ligand>
        <name>histamine</name>
        <dbReference type="ChEBI" id="CHEBI:58432"/>
    </ligand>
</feature>
<feature type="modified residue" description="Phosphothreonine" evidence="1">
    <location>
        <position position="149"/>
    </location>
</feature>
<feature type="modified residue" description="Phosphothreonine" evidence="1">
    <location>
        <position position="151"/>
    </location>
</feature>
<feature type="modified residue" description="Phosphoserine" evidence="1">
    <location>
        <position position="239"/>
    </location>
</feature>
<feature type="modified residue" description="Phosphoserine" evidence="2">
    <location>
        <position position="345"/>
    </location>
</feature>
<feature type="modified residue" description="Phosphoserine" evidence="2">
    <location>
        <position position="381"/>
    </location>
</feature>
<feature type="modified residue" description="Phosphoserine" evidence="2">
    <location>
        <position position="383"/>
    </location>
</feature>
<feature type="modified residue" description="Phosphoserine" evidence="1">
    <location>
        <position position="397"/>
    </location>
</feature>
<feature type="modified residue" description="Phosphoserine" evidence="1">
    <location>
        <position position="399"/>
    </location>
</feature>
<feature type="glycosylation site" description="N-linked (GlcNAc...) asparagine" evidence="3">
    <location>
        <position position="14"/>
    </location>
</feature>
<feature type="glycosylation site" description="N-linked (GlcNAc...) asparagine" evidence="3">
    <location>
        <position position="27"/>
    </location>
</feature>
<feature type="disulfide bond" evidence="4">
    <location>
        <begin position="109"/>
        <end position="189"/>
    </location>
</feature>
<feature type="disulfide bond" evidence="4">
    <location>
        <begin position="442"/>
        <end position="445"/>
    </location>
</feature>
<gene>
    <name evidence="1" type="primary">HRH1</name>
</gene>
<evidence type="ECO:0000250" key="1">
    <source>
        <dbReference type="UniProtKB" id="P35367"/>
    </source>
</evidence>
<evidence type="ECO:0000250" key="2">
    <source>
        <dbReference type="UniProtKB" id="P70174"/>
    </source>
</evidence>
<evidence type="ECO:0000255" key="3"/>
<evidence type="ECO:0000255" key="4">
    <source>
        <dbReference type="PROSITE-ProRule" id="PRU00521"/>
    </source>
</evidence>
<evidence type="ECO:0000256" key="5">
    <source>
        <dbReference type="SAM" id="MobiDB-lite"/>
    </source>
</evidence>
<evidence type="ECO:0000269" key="6">
    <source>
    </source>
</evidence>
<evidence type="ECO:0000303" key="7">
    <source>
    </source>
</evidence>
<evidence type="ECO:0000305" key="8"/>
<dbReference type="EMBL" id="D15074">
    <property type="protein sequence ID" value="BAA03669.1"/>
    <property type="molecule type" value="Genomic_DNA"/>
</dbReference>
<dbReference type="EMBL" id="S68706">
    <property type="protein sequence ID" value="AAC60674.1"/>
    <property type="molecule type" value="Genomic_DNA"/>
</dbReference>
<dbReference type="PIR" id="I56507">
    <property type="entry name" value="I56507"/>
</dbReference>
<dbReference type="SMR" id="P31389"/>
<dbReference type="FunCoup" id="P31389">
    <property type="interactions" value="950"/>
</dbReference>
<dbReference type="STRING" id="10141.ENSCPOP00000017245"/>
<dbReference type="BindingDB" id="P31389"/>
<dbReference type="ChEMBL" id="CHEMBL3943"/>
<dbReference type="DrugCentral" id="P31389"/>
<dbReference type="GlyCosmos" id="P31389">
    <property type="glycosylation" value="2 sites, No reported glycans"/>
</dbReference>
<dbReference type="eggNOG" id="KOG4220">
    <property type="taxonomic scope" value="Eukaryota"/>
</dbReference>
<dbReference type="HOGENOM" id="CLU_009579_11_2_1"/>
<dbReference type="InParanoid" id="P31389"/>
<dbReference type="TreeFam" id="TF333432"/>
<dbReference type="Proteomes" id="UP000005447">
    <property type="component" value="Unassembled WGS sequence"/>
</dbReference>
<dbReference type="GO" id="GO:0030425">
    <property type="term" value="C:dendrite"/>
    <property type="evidence" value="ECO:0007669"/>
    <property type="project" value="TreeGrafter"/>
</dbReference>
<dbReference type="GO" id="GO:0005886">
    <property type="term" value="C:plasma membrane"/>
    <property type="evidence" value="ECO:0000314"/>
    <property type="project" value="BHF-UCL"/>
</dbReference>
<dbReference type="GO" id="GO:0045202">
    <property type="term" value="C:synapse"/>
    <property type="evidence" value="ECO:0007669"/>
    <property type="project" value="GOC"/>
</dbReference>
<dbReference type="GO" id="GO:0015085">
    <property type="term" value="F:calcium ion transmembrane transporter activity"/>
    <property type="evidence" value="ECO:0000314"/>
    <property type="project" value="MGI"/>
</dbReference>
<dbReference type="GO" id="GO:0004993">
    <property type="term" value="F:G protein-coupled serotonin receptor activity"/>
    <property type="evidence" value="ECO:0007669"/>
    <property type="project" value="TreeGrafter"/>
</dbReference>
<dbReference type="GO" id="GO:0004969">
    <property type="term" value="F:histamine receptor activity"/>
    <property type="evidence" value="ECO:0000314"/>
    <property type="project" value="BHF-UCL"/>
</dbReference>
<dbReference type="GO" id="GO:0030594">
    <property type="term" value="F:neurotransmitter receptor activity"/>
    <property type="evidence" value="ECO:0007669"/>
    <property type="project" value="TreeGrafter"/>
</dbReference>
<dbReference type="GO" id="GO:0070509">
    <property type="term" value="P:calcium ion import"/>
    <property type="evidence" value="ECO:0000314"/>
    <property type="project" value="MGI"/>
</dbReference>
<dbReference type="GO" id="GO:0071420">
    <property type="term" value="P:cellular response to histamine"/>
    <property type="evidence" value="ECO:0000314"/>
    <property type="project" value="BHF-UCL"/>
</dbReference>
<dbReference type="GO" id="GO:0007268">
    <property type="term" value="P:chemical synaptic transmission"/>
    <property type="evidence" value="ECO:0007669"/>
    <property type="project" value="TreeGrafter"/>
</dbReference>
<dbReference type="GO" id="GO:0007186">
    <property type="term" value="P:G protein-coupled receptor signaling pathway"/>
    <property type="evidence" value="ECO:0000250"/>
    <property type="project" value="UniProtKB"/>
</dbReference>
<dbReference type="GO" id="GO:0007187">
    <property type="term" value="P:G protein-coupled receptor signaling pathway, coupled to cyclic nucleotide second messenger"/>
    <property type="evidence" value="ECO:0007669"/>
    <property type="project" value="TreeGrafter"/>
</dbReference>
<dbReference type="GO" id="GO:0006954">
    <property type="term" value="P:inflammatory response"/>
    <property type="evidence" value="ECO:0000314"/>
    <property type="project" value="BHF-UCL"/>
</dbReference>
<dbReference type="GO" id="GO:0071421">
    <property type="term" value="P:manganese ion transmembrane transport"/>
    <property type="evidence" value="ECO:0000314"/>
    <property type="project" value="MGI"/>
</dbReference>
<dbReference type="GO" id="GO:0007200">
    <property type="term" value="P:phospholipase C-activating G protein-coupled receptor signaling pathway"/>
    <property type="evidence" value="ECO:0000314"/>
    <property type="project" value="BHF-UCL"/>
</dbReference>
<dbReference type="GO" id="GO:0045907">
    <property type="term" value="P:positive regulation of vasoconstriction"/>
    <property type="evidence" value="ECO:0007669"/>
    <property type="project" value="InterPro"/>
</dbReference>
<dbReference type="GO" id="GO:0043114">
    <property type="term" value="P:regulation of vascular permeability"/>
    <property type="evidence" value="ECO:0007669"/>
    <property type="project" value="InterPro"/>
</dbReference>
<dbReference type="CDD" id="cd15050">
    <property type="entry name" value="7tmA_Histamine_H1R"/>
    <property type="match status" value="1"/>
</dbReference>
<dbReference type="FunFam" id="1.20.1070.10:FF:000147">
    <property type="entry name" value="Histamine H1 receptor"/>
    <property type="match status" value="1"/>
</dbReference>
<dbReference type="FunFam" id="1.20.1070.10:FF:000189">
    <property type="entry name" value="Histamine H1 receptor"/>
    <property type="match status" value="1"/>
</dbReference>
<dbReference type="Gene3D" id="1.20.1070.10">
    <property type="entry name" value="Rhodopsin 7-helix transmembrane proteins"/>
    <property type="match status" value="2"/>
</dbReference>
<dbReference type="InterPro" id="IPR000276">
    <property type="entry name" value="GPCR_Rhodpsn"/>
</dbReference>
<dbReference type="InterPro" id="IPR017452">
    <property type="entry name" value="GPCR_Rhodpsn_7TM"/>
</dbReference>
<dbReference type="InterPro" id="IPR000921">
    <property type="entry name" value="Histamine_H1_rcpt"/>
</dbReference>
<dbReference type="PANTHER" id="PTHR24247">
    <property type="entry name" value="5-HYDROXYTRYPTAMINE RECEPTOR"/>
    <property type="match status" value="1"/>
</dbReference>
<dbReference type="PANTHER" id="PTHR24247:SF223">
    <property type="entry name" value="HISTAMINE H1 RECEPTOR"/>
    <property type="match status" value="1"/>
</dbReference>
<dbReference type="Pfam" id="PF00001">
    <property type="entry name" value="7tm_1"/>
    <property type="match status" value="1"/>
</dbReference>
<dbReference type="PRINTS" id="PR00237">
    <property type="entry name" value="GPCRRHODOPSN"/>
</dbReference>
<dbReference type="PRINTS" id="PR00530">
    <property type="entry name" value="HISTAMINEH1R"/>
</dbReference>
<dbReference type="SMART" id="SM01381">
    <property type="entry name" value="7TM_GPCR_Srsx"/>
    <property type="match status" value="1"/>
</dbReference>
<dbReference type="SUPFAM" id="SSF81321">
    <property type="entry name" value="Family A G protein-coupled receptor-like"/>
    <property type="match status" value="1"/>
</dbReference>
<dbReference type="PROSITE" id="PS00237">
    <property type="entry name" value="G_PROTEIN_RECEP_F1_1"/>
    <property type="match status" value="1"/>
</dbReference>
<dbReference type="PROSITE" id="PS50262">
    <property type="entry name" value="G_PROTEIN_RECEP_F1_2"/>
    <property type="match status" value="1"/>
</dbReference>
<proteinExistence type="inferred from homology"/>
<name>HRH1_CAVPO</name>
<keyword id="KW-1003">Cell membrane</keyword>
<keyword id="KW-1015">Disulfide bond</keyword>
<keyword id="KW-0297">G-protein coupled receptor</keyword>
<keyword id="KW-0325">Glycoprotein</keyword>
<keyword id="KW-0472">Membrane</keyword>
<keyword id="KW-0597">Phosphoprotein</keyword>
<keyword id="KW-0675">Receptor</keyword>
<keyword id="KW-1185">Reference proteome</keyword>
<keyword id="KW-0807">Transducer</keyword>
<keyword id="KW-0812">Transmembrane</keyword>
<keyword id="KW-1133">Transmembrane helix</keyword>
<organism>
    <name type="scientific">Cavia porcellus</name>
    <name type="common">Guinea pig</name>
    <dbReference type="NCBI Taxonomy" id="10141"/>
    <lineage>
        <taxon>Eukaryota</taxon>
        <taxon>Metazoa</taxon>
        <taxon>Chordata</taxon>
        <taxon>Craniata</taxon>
        <taxon>Vertebrata</taxon>
        <taxon>Euteleostomi</taxon>
        <taxon>Mammalia</taxon>
        <taxon>Eutheria</taxon>
        <taxon>Euarchontoglires</taxon>
        <taxon>Glires</taxon>
        <taxon>Rodentia</taxon>
        <taxon>Hystricomorpha</taxon>
        <taxon>Caviidae</taxon>
        <taxon>Cavia</taxon>
    </lineage>
</organism>